<proteinExistence type="evidence at protein level"/>
<reference key="1">
    <citation type="journal article" date="2012" name="PLoS Pathog.">
        <title>Diverse lifestyles and strategies of plant pathogenesis encoded in the genomes of eighteen Dothideomycetes fungi.</title>
        <authorList>
            <person name="Ohm R.A."/>
            <person name="Feau N."/>
            <person name="Henrissat B."/>
            <person name="Schoch C.L."/>
            <person name="Horwitz B.A."/>
            <person name="Barry K.W."/>
            <person name="Condon B.J."/>
            <person name="Copeland A.C."/>
            <person name="Dhillon B."/>
            <person name="Glaser F."/>
            <person name="Hesse C.N."/>
            <person name="Kosti I."/>
            <person name="LaButti K."/>
            <person name="Lindquist E.A."/>
            <person name="Lucas S."/>
            <person name="Salamov A.A."/>
            <person name="Bradshaw R.E."/>
            <person name="Ciuffetti L."/>
            <person name="Hamelin R.C."/>
            <person name="Kema G.H.J."/>
            <person name="Lawrence C."/>
            <person name="Scott J.A."/>
            <person name="Spatafora J.W."/>
            <person name="Turgeon B.G."/>
            <person name="de Wit P.J.G.M."/>
            <person name="Zhong S."/>
            <person name="Goodwin S.B."/>
            <person name="Grigoriev I.V."/>
        </authorList>
    </citation>
    <scope>NUCLEOTIDE SEQUENCE [LARGE SCALE GENOMIC DNA]</scope>
    <source>
        <strain>C5 / ATCC 48332 / race O</strain>
    </source>
</reference>
<reference key="2">
    <citation type="journal article" date="2013" name="PLoS Genet.">
        <title>Comparative genome structure, secondary metabolite, and effector coding capacity across Cochliobolus pathogens.</title>
        <authorList>
            <person name="Condon B.J."/>
            <person name="Leng Y."/>
            <person name="Wu D."/>
            <person name="Bushley K.E."/>
            <person name="Ohm R.A."/>
            <person name="Otillar R."/>
            <person name="Martin J."/>
            <person name="Schackwitz W."/>
            <person name="Grimwood J."/>
            <person name="MohdZainudin N."/>
            <person name="Xue C."/>
            <person name="Wang R."/>
            <person name="Manning V.A."/>
            <person name="Dhillon B."/>
            <person name="Tu Z.J."/>
            <person name="Steffenson B.J."/>
            <person name="Salamov A."/>
            <person name="Sun H."/>
            <person name="Lowry S."/>
            <person name="LaButti K."/>
            <person name="Han J."/>
            <person name="Copeland A."/>
            <person name="Lindquist E."/>
            <person name="Barry K."/>
            <person name="Schmutz J."/>
            <person name="Baker S.E."/>
            <person name="Ciuffetti L.M."/>
            <person name="Grigoriev I.V."/>
            <person name="Zhong S."/>
            <person name="Turgeon B.G."/>
        </authorList>
    </citation>
    <scope>NUCLEOTIDE SEQUENCE [LARGE SCALE GENOMIC DNA]</scope>
    <source>
        <strain>C5 / ATCC 48332 / race O</strain>
    </source>
</reference>
<reference key="3">
    <citation type="journal article" date="2017" name="Org. Lett.">
        <title>Focused genome mining of structurally related sesterterpenes: enzymatic formation of enantiomeric and diastereomeric products.</title>
        <authorList>
            <person name="Narita K."/>
            <person name="Sato H."/>
            <person name="Minami A."/>
            <person name="Kudo K."/>
            <person name="Gao L."/>
            <person name="Liu C."/>
            <person name="Ozaki T."/>
            <person name="Kodama M."/>
            <person name="Lei X."/>
            <person name="Taniguchi T."/>
            <person name="Monde K."/>
            <person name="Yamazaki M."/>
            <person name="Uchiyama M."/>
            <person name="Oikawa H."/>
        </authorList>
    </citation>
    <scope>FUNCTION</scope>
</reference>
<reference key="4">
    <citation type="journal article" date="2018" name="J. Org. Chem.">
        <title>Total biosynthesis of antiangiogenic agent (-)-terpestacin by artificial reconstitution of the biosynthetic machinery in Aspergillus oryzae.</title>
        <authorList>
            <person name="Narita K."/>
            <person name="Minami A."/>
            <person name="Ozaki T."/>
            <person name="Liu C."/>
            <person name="Kodama M."/>
            <person name="Oikawa H."/>
        </authorList>
    </citation>
    <scope>FUNCTION</scope>
    <scope>CATALYTIC ACTIVITY</scope>
    <scope>PATHWAY</scope>
</reference>
<organism>
    <name type="scientific">Cochliobolus heterostrophus (strain C5 / ATCC 48332 / race O)</name>
    <name type="common">Southern corn leaf blight fungus</name>
    <name type="synonym">Bipolaris maydis</name>
    <dbReference type="NCBI Taxonomy" id="701091"/>
    <lineage>
        <taxon>Eukaryota</taxon>
        <taxon>Fungi</taxon>
        <taxon>Dikarya</taxon>
        <taxon>Ascomycota</taxon>
        <taxon>Pezizomycotina</taxon>
        <taxon>Dothideomycetes</taxon>
        <taxon>Pleosporomycetidae</taxon>
        <taxon>Pleosporales</taxon>
        <taxon>Pleosporineae</taxon>
        <taxon>Pleosporaceae</taxon>
        <taxon>Bipolaris</taxon>
    </lineage>
</organism>
<keyword id="KW-0349">Heme</keyword>
<keyword id="KW-0408">Iron</keyword>
<keyword id="KW-0479">Metal-binding</keyword>
<keyword id="KW-0503">Monooxygenase</keyword>
<keyword id="KW-0560">Oxidoreductase</keyword>
<keyword id="KW-1185">Reference proteome</keyword>
<gene>
    <name evidence="4" type="primary">tpcB</name>
    <name type="ORF">COCHEDRAFT_1223366</name>
</gene>
<dbReference type="EC" id="1.-.-.-" evidence="3"/>
<dbReference type="EMBL" id="KB445573">
    <property type="protein sequence ID" value="EMD93703.1"/>
    <property type="molecule type" value="Genomic_DNA"/>
</dbReference>
<dbReference type="SMR" id="M2V0Z8"/>
<dbReference type="STRING" id="701091.M2V0Z8"/>
<dbReference type="eggNOG" id="KOG0157">
    <property type="taxonomic scope" value="Eukaryota"/>
</dbReference>
<dbReference type="HOGENOM" id="CLU_001570_14_11_1"/>
<dbReference type="OMA" id="CIGRHMA"/>
<dbReference type="OrthoDB" id="9891at28556"/>
<dbReference type="UniPathway" id="UPA00213"/>
<dbReference type="Proteomes" id="UP000016936">
    <property type="component" value="Unassembled WGS sequence"/>
</dbReference>
<dbReference type="GO" id="GO:0020037">
    <property type="term" value="F:heme binding"/>
    <property type="evidence" value="ECO:0007669"/>
    <property type="project" value="InterPro"/>
</dbReference>
<dbReference type="GO" id="GO:0005506">
    <property type="term" value="F:iron ion binding"/>
    <property type="evidence" value="ECO:0007669"/>
    <property type="project" value="InterPro"/>
</dbReference>
<dbReference type="GO" id="GO:0004497">
    <property type="term" value="F:monooxygenase activity"/>
    <property type="evidence" value="ECO:0007669"/>
    <property type="project" value="UniProtKB-KW"/>
</dbReference>
<dbReference type="GO" id="GO:0016705">
    <property type="term" value="F:oxidoreductase activity, acting on paired donors, with incorporation or reduction of molecular oxygen"/>
    <property type="evidence" value="ECO:0007669"/>
    <property type="project" value="InterPro"/>
</dbReference>
<dbReference type="GO" id="GO:0016114">
    <property type="term" value="P:terpenoid biosynthetic process"/>
    <property type="evidence" value="ECO:0007669"/>
    <property type="project" value="UniProtKB-UniPathway"/>
</dbReference>
<dbReference type="Gene3D" id="1.10.630.10">
    <property type="entry name" value="Cytochrome P450"/>
    <property type="match status" value="1"/>
</dbReference>
<dbReference type="InterPro" id="IPR001128">
    <property type="entry name" value="Cyt_P450"/>
</dbReference>
<dbReference type="InterPro" id="IPR002401">
    <property type="entry name" value="Cyt_P450_E_grp-I"/>
</dbReference>
<dbReference type="InterPro" id="IPR036396">
    <property type="entry name" value="Cyt_P450_sf"/>
</dbReference>
<dbReference type="InterPro" id="IPR050121">
    <property type="entry name" value="Cytochrome_P450_monoxygenase"/>
</dbReference>
<dbReference type="PANTHER" id="PTHR24305">
    <property type="entry name" value="CYTOCHROME P450"/>
    <property type="match status" value="1"/>
</dbReference>
<dbReference type="PANTHER" id="PTHR24305:SF162">
    <property type="entry name" value="P450, PUTATIVE (EUROFUNG)-RELATED"/>
    <property type="match status" value="1"/>
</dbReference>
<dbReference type="Pfam" id="PF00067">
    <property type="entry name" value="p450"/>
    <property type="match status" value="1"/>
</dbReference>
<dbReference type="PRINTS" id="PR00463">
    <property type="entry name" value="EP450I"/>
</dbReference>
<dbReference type="PRINTS" id="PR00385">
    <property type="entry name" value="P450"/>
</dbReference>
<dbReference type="SUPFAM" id="SSF48264">
    <property type="entry name" value="Cytochrome P450"/>
    <property type="match status" value="1"/>
</dbReference>
<protein>
    <recommendedName>
        <fullName evidence="4">Cytochrome P450 monooxygenase tpcB</fullName>
        <ecNumber evidence="3">1.-.-.-</ecNumber>
    </recommendedName>
    <alternativeName>
        <fullName evidence="4">Terpestacin biosynthesis cluster protein B</fullName>
    </alternativeName>
</protein>
<comment type="function">
    <text evidence="2 3">Cytochrome P450 monooxygenase; part of the gene cluster that mediates the biosynthesis of terpestacin (PubMed:29185768). The bifunctional terpene synthase tpcA converts isopentenyl diphosphate (IPP) and dimethylallyl diphosphate (DMAPP) into the sesterterpene preterpestacin I (PubMed:29185768). The C-terminal prenyltransferase (PT) domain of tpcA catalyzes formation of GFPP, whereas the N-terminal terpene cyclase (TC) domain catalyzes the cyclization of GFPP into preterpestacin I (PubMed:29185768). The cytochrome P450 monooxygenase tpcB then hydroxylates preterpestacin I to yield 24-hydroxypreterpstacin I (renamed as preterpestacin II) whereas the cytochrome P450 monooxygenase tpcC further hydroxylates preterpestacin II to yield 16,17-dihydroxypreterpestacin II (renamed as preterpestacin III) (PubMed:29417814). Finally, the FAD-dependent monooxygenase tpcD converts preterpestacin III into terpestacin (PubMed:29417814).</text>
</comment>
<comment type="cofactor">
    <cofactor evidence="1">
        <name>heme</name>
        <dbReference type="ChEBI" id="CHEBI:30413"/>
    </cofactor>
</comment>
<comment type="pathway">
    <text evidence="3">Secondary metabolite biosynthesis; terpenoid biosynthesis.</text>
</comment>
<comment type="similarity">
    <text evidence="5">Belongs to the cytochrome P450 family.</text>
</comment>
<evidence type="ECO:0000250" key="1">
    <source>
        <dbReference type="UniProtKB" id="P04798"/>
    </source>
</evidence>
<evidence type="ECO:0000269" key="2">
    <source>
    </source>
</evidence>
<evidence type="ECO:0000269" key="3">
    <source>
    </source>
</evidence>
<evidence type="ECO:0000303" key="4">
    <source>
    </source>
</evidence>
<evidence type="ECO:0000305" key="5"/>
<feature type="chain" id="PRO_0000453715" description="Cytochrome P450 monooxygenase tpcB">
    <location>
        <begin position="1"/>
        <end position="506"/>
    </location>
</feature>
<feature type="binding site" description="axial binding residue" evidence="1">
    <location>
        <position position="450"/>
    </location>
    <ligand>
        <name>heme</name>
        <dbReference type="ChEBI" id="CHEBI:30413"/>
    </ligand>
    <ligandPart>
        <name>Fe</name>
        <dbReference type="ChEBI" id="CHEBI:18248"/>
    </ligandPart>
</feature>
<accession>M2V0Z8</accession>
<name>TPCB_COCH5</name>
<sequence>MAVISLLQGLSVGQQIGTAAAISVFVLTSIVVYGCYLHPLSHVPGPFLAKFSPIWGMRALYRMKFNSELQALHEKYGPVVRVAPNEVSFATLEAETAIYANQEDGRFSKAGTFLTLFSDLVLNAPTLITIPDPALHKRLHKVIQQAFTPQALASQEPIQKLHIEKAIPDFDETADKGYHIDLADKLETMFWEIIGDLAFGEPLMAGKRPTYEKLKQLGKGSMPMVEALSFMLVMPGVAPTLEMARSFLSAMPMSSQLSKLVPSTKLRDCVERKDGREDFLSAIMGSEKQGLTLDADAFFSNAMGLTLAGYQTTATTLASTFYHVLRYTDAYKTLCTEIRSAFNDEAEITGERLARLPFLNACIRETLRLLPPANGKTAQRTAPSCTIADTYIPAGTIVSADLYTIQRSPKYFVDPARFHPERWLEDAEKNGFNGDNRSASRPFLIGSRACIGRHMAQQSIRLIMATLLWRYDFELLDPDGFIWERDAGSSLIYTDYKLPVHVKRFQ</sequence>